<comment type="similarity">
    <text evidence="2">Belongs to the LysR transcriptional regulatory family.</text>
</comment>
<dbReference type="EMBL" id="U00096">
    <property type="protein sequence ID" value="AAC73986.1"/>
    <property type="molecule type" value="Genomic_DNA"/>
</dbReference>
<dbReference type="EMBL" id="AP009048">
    <property type="protein sequence ID" value="BAA35635.1"/>
    <property type="molecule type" value="Genomic_DNA"/>
</dbReference>
<dbReference type="PIR" id="C64829">
    <property type="entry name" value="C64829"/>
</dbReference>
<dbReference type="RefSeq" id="NP_415420.1">
    <property type="nucleotide sequence ID" value="NC_000913.3"/>
</dbReference>
<dbReference type="RefSeq" id="WP_001242684.1">
    <property type="nucleotide sequence ID" value="NZ_SSZK01000002.1"/>
</dbReference>
<dbReference type="SMR" id="P75836"/>
<dbReference type="BioGRID" id="4261671">
    <property type="interactions" value="187"/>
</dbReference>
<dbReference type="FunCoup" id="P75836">
    <property type="interactions" value="119"/>
</dbReference>
<dbReference type="STRING" id="511145.b0900"/>
<dbReference type="PaxDb" id="511145-b0900"/>
<dbReference type="DNASU" id="945523"/>
<dbReference type="EnsemblBacteria" id="AAC73986">
    <property type="protein sequence ID" value="AAC73986"/>
    <property type="gene ID" value="b0900"/>
</dbReference>
<dbReference type="GeneID" id="945523"/>
<dbReference type="KEGG" id="ecj:JW0883"/>
<dbReference type="KEGG" id="eco:b0900"/>
<dbReference type="KEGG" id="ecoc:C3026_05560"/>
<dbReference type="PATRIC" id="fig|1411691.4.peg.1376"/>
<dbReference type="EchoBASE" id="EB3462"/>
<dbReference type="eggNOG" id="COG0583">
    <property type="taxonomic scope" value="Bacteria"/>
</dbReference>
<dbReference type="HOGENOM" id="CLU_039613_16_1_6"/>
<dbReference type="InParanoid" id="P75836"/>
<dbReference type="OMA" id="EIFSWLV"/>
<dbReference type="OrthoDB" id="9813056at2"/>
<dbReference type="PhylomeDB" id="P75836"/>
<dbReference type="BioCyc" id="EcoCyc:G6467-MONOMER"/>
<dbReference type="PRO" id="PR:P75836"/>
<dbReference type="Proteomes" id="UP000000625">
    <property type="component" value="Chromosome"/>
</dbReference>
<dbReference type="GO" id="GO:0003700">
    <property type="term" value="F:DNA-binding transcription factor activity"/>
    <property type="evidence" value="ECO:0000318"/>
    <property type="project" value="GO_Central"/>
</dbReference>
<dbReference type="GO" id="GO:0043565">
    <property type="term" value="F:sequence-specific DNA binding"/>
    <property type="evidence" value="ECO:0000318"/>
    <property type="project" value="GO_Central"/>
</dbReference>
<dbReference type="GO" id="GO:0006351">
    <property type="term" value="P:DNA-templated transcription"/>
    <property type="evidence" value="ECO:0000318"/>
    <property type="project" value="GO_Central"/>
</dbReference>
<dbReference type="CDD" id="cd08474">
    <property type="entry name" value="PBP2_CrgA_like_5"/>
    <property type="match status" value="1"/>
</dbReference>
<dbReference type="FunFam" id="1.10.10.10:FF:000001">
    <property type="entry name" value="LysR family transcriptional regulator"/>
    <property type="match status" value="1"/>
</dbReference>
<dbReference type="Gene3D" id="3.40.190.290">
    <property type="match status" value="1"/>
</dbReference>
<dbReference type="Gene3D" id="1.10.10.10">
    <property type="entry name" value="Winged helix-like DNA-binding domain superfamily/Winged helix DNA-binding domain"/>
    <property type="match status" value="1"/>
</dbReference>
<dbReference type="InterPro" id="IPR005119">
    <property type="entry name" value="LysR_subst-bd"/>
</dbReference>
<dbReference type="InterPro" id="IPR000847">
    <property type="entry name" value="Tscrpt_reg_HTH_LysR"/>
</dbReference>
<dbReference type="InterPro" id="IPR036388">
    <property type="entry name" value="WH-like_DNA-bd_sf"/>
</dbReference>
<dbReference type="InterPro" id="IPR036390">
    <property type="entry name" value="WH_DNA-bd_sf"/>
</dbReference>
<dbReference type="PANTHER" id="PTHR30537">
    <property type="entry name" value="HTH-TYPE TRANSCRIPTIONAL REGULATOR"/>
    <property type="match status" value="1"/>
</dbReference>
<dbReference type="PANTHER" id="PTHR30537:SF1">
    <property type="entry name" value="HTH-TYPE TRANSCRIPTIONAL REGULATOR PGRR"/>
    <property type="match status" value="1"/>
</dbReference>
<dbReference type="Pfam" id="PF00126">
    <property type="entry name" value="HTH_1"/>
    <property type="match status" value="1"/>
</dbReference>
<dbReference type="Pfam" id="PF03466">
    <property type="entry name" value="LysR_substrate"/>
    <property type="match status" value="1"/>
</dbReference>
<dbReference type="SUPFAM" id="SSF53850">
    <property type="entry name" value="Periplasmic binding protein-like II"/>
    <property type="match status" value="1"/>
</dbReference>
<dbReference type="SUPFAM" id="SSF46785">
    <property type="entry name" value="Winged helix' DNA-binding domain"/>
    <property type="match status" value="1"/>
</dbReference>
<dbReference type="PROSITE" id="PS50931">
    <property type="entry name" value="HTH_LYSR"/>
    <property type="match status" value="1"/>
</dbReference>
<sequence>MRMNMSDFATFFAVARNQSFRAAGDELGLSSSAISHSIKTLEQRLKIRLFNRTTRSVSLTEAGSNLYERLRPAFDEIQIMLDEMNDFRLTPTGTLKINAARVAARIFLMSLLVGFTREYPDIKVELTTDDSLVDIVQQGFDAGVRLSCIVEKDMISVAIGPPVKLCVAATPEYFARYGKPRHPHDLLNHQCVVFRYPSGKPFHWQFAKELEIAVAGNIILDDVDAELEAVLMGAGIGYLLYEQIKEYLDTGRLECVLEDWSTERPGFQIYYPNRQYMSCGLRAFLDYVKTGQICQSQRHRPQ</sequence>
<proteinExistence type="inferred from homology"/>
<accession>P75836</accession>
<feature type="chain" id="PRO_0000105781" description="Uncharacterized HTH-type transcriptional regulator YcaN">
    <location>
        <begin position="1"/>
        <end position="302"/>
    </location>
</feature>
<feature type="domain" description="HTH lysR-type" evidence="1">
    <location>
        <begin position="1"/>
        <end position="60"/>
    </location>
</feature>
<feature type="DNA-binding region" description="H-T-H motif" evidence="1">
    <location>
        <begin position="20"/>
        <end position="40"/>
    </location>
</feature>
<evidence type="ECO:0000255" key="1">
    <source>
        <dbReference type="PROSITE-ProRule" id="PRU00253"/>
    </source>
</evidence>
<evidence type="ECO:0000305" key="2"/>
<gene>
    <name type="primary">ycaN</name>
    <name type="ordered locus">b0900</name>
    <name type="ordered locus">JW0883</name>
</gene>
<protein>
    <recommendedName>
        <fullName>Uncharacterized HTH-type transcriptional regulator YcaN</fullName>
    </recommendedName>
</protein>
<organism>
    <name type="scientific">Escherichia coli (strain K12)</name>
    <dbReference type="NCBI Taxonomy" id="83333"/>
    <lineage>
        <taxon>Bacteria</taxon>
        <taxon>Pseudomonadati</taxon>
        <taxon>Pseudomonadota</taxon>
        <taxon>Gammaproteobacteria</taxon>
        <taxon>Enterobacterales</taxon>
        <taxon>Enterobacteriaceae</taxon>
        <taxon>Escherichia</taxon>
    </lineage>
</organism>
<reference key="1">
    <citation type="journal article" date="1996" name="DNA Res.">
        <title>A 718-kb DNA sequence of the Escherichia coli K-12 genome corresponding to the 12.7-28.0 min region on the linkage map.</title>
        <authorList>
            <person name="Oshima T."/>
            <person name="Aiba H."/>
            <person name="Baba T."/>
            <person name="Fujita K."/>
            <person name="Hayashi K."/>
            <person name="Honjo A."/>
            <person name="Ikemoto K."/>
            <person name="Inada T."/>
            <person name="Itoh T."/>
            <person name="Kajihara M."/>
            <person name="Kanai K."/>
            <person name="Kashimoto K."/>
            <person name="Kimura S."/>
            <person name="Kitagawa M."/>
            <person name="Makino K."/>
            <person name="Masuda S."/>
            <person name="Miki T."/>
            <person name="Mizobuchi K."/>
            <person name="Mori H."/>
            <person name="Motomura K."/>
            <person name="Nakamura Y."/>
            <person name="Nashimoto H."/>
            <person name="Nishio Y."/>
            <person name="Saito N."/>
            <person name="Sampei G."/>
            <person name="Seki Y."/>
            <person name="Tagami H."/>
            <person name="Takemoto K."/>
            <person name="Wada C."/>
            <person name="Yamamoto Y."/>
            <person name="Yano M."/>
            <person name="Horiuchi T."/>
        </authorList>
    </citation>
    <scope>NUCLEOTIDE SEQUENCE [LARGE SCALE GENOMIC DNA]</scope>
    <source>
        <strain>K12 / W3110 / ATCC 27325 / DSM 5911</strain>
    </source>
</reference>
<reference key="2">
    <citation type="journal article" date="1997" name="Science">
        <title>The complete genome sequence of Escherichia coli K-12.</title>
        <authorList>
            <person name="Blattner F.R."/>
            <person name="Plunkett G. III"/>
            <person name="Bloch C.A."/>
            <person name="Perna N.T."/>
            <person name="Burland V."/>
            <person name="Riley M."/>
            <person name="Collado-Vides J."/>
            <person name="Glasner J.D."/>
            <person name="Rode C.K."/>
            <person name="Mayhew G.F."/>
            <person name="Gregor J."/>
            <person name="Davis N.W."/>
            <person name="Kirkpatrick H.A."/>
            <person name="Goeden M.A."/>
            <person name="Rose D.J."/>
            <person name="Mau B."/>
            <person name="Shao Y."/>
        </authorList>
    </citation>
    <scope>NUCLEOTIDE SEQUENCE [LARGE SCALE GENOMIC DNA]</scope>
    <source>
        <strain>K12 / MG1655 / ATCC 47076</strain>
    </source>
</reference>
<reference key="3">
    <citation type="journal article" date="2006" name="Mol. Syst. Biol.">
        <title>Highly accurate genome sequences of Escherichia coli K-12 strains MG1655 and W3110.</title>
        <authorList>
            <person name="Hayashi K."/>
            <person name="Morooka N."/>
            <person name="Yamamoto Y."/>
            <person name="Fujita K."/>
            <person name="Isono K."/>
            <person name="Choi S."/>
            <person name="Ohtsubo E."/>
            <person name="Baba T."/>
            <person name="Wanner B.L."/>
            <person name="Mori H."/>
            <person name="Horiuchi T."/>
        </authorList>
    </citation>
    <scope>NUCLEOTIDE SEQUENCE [LARGE SCALE GENOMIC DNA]</scope>
    <source>
        <strain>K12 / W3110 / ATCC 27325 / DSM 5911</strain>
    </source>
</reference>
<keyword id="KW-0238">DNA-binding</keyword>
<keyword id="KW-1185">Reference proteome</keyword>
<keyword id="KW-0804">Transcription</keyword>
<keyword id="KW-0805">Transcription regulation</keyword>
<name>YCAN_ECOLI</name>